<proteinExistence type="inferred from homology"/>
<accession>Q2A2E5</accession>
<comment type="similarity">
    <text evidence="1">Belongs to the bacterial ribosomal protein bL27 family.</text>
</comment>
<keyword id="KW-1185">Reference proteome</keyword>
<keyword id="KW-0687">Ribonucleoprotein</keyword>
<keyword id="KW-0689">Ribosomal protein</keyword>
<evidence type="ECO:0000255" key="1">
    <source>
        <dbReference type="HAMAP-Rule" id="MF_00539"/>
    </source>
</evidence>
<evidence type="ECO:0000256" key="2">
    <source>
        <dbReference type="SAM" id="MobiDB-lite"/>
    </source>
</evidence>
<evidence type="ECO:0000305" key="3"/>
<reference key="1">
    <citation type="submission" date="2006-03" db="EMBL/GenBank/DDBJ databases">
        <title>Complete genome sequence of Francisella tularensis LVS (Live Vaccine Strain).</title>
        <authorList>
            <person name="Chain P."/>
            <person name="Larimer F."/>
            <person name="Land M."/>
            <person name="Stilwagen S."/>
            <person name="Larsson P."/>
            <person name="Bearden S."/>
            <person name="Chu M."/>
            <person name="Oyston P."/>
            <person name="Forsman M."/>
            <person name="Andersson S."/>
            <person name="Lindler L."/>
            <person name="Titball R."/>
            <person name="Garcia E."/>
        </authorList>
    </citation>
    <scope>NUCLEOTIDE SEQUENCE [LARGE SCALE GENOMIC DNA]</scope>
    <source>
        <strain>LVS</strain>
    </source>
</reference>
<protein>
    <recommendedName>
        <fullName evidence="1">Large ribosomal subunit protein bL27</fullName>
    </recommendedName>
    <alternativeName>
        <fullName evidence="3">50S ribosomal protein L27</fullName>
    </alternativeName>
</protein>
<sequence length="84" mass="9035">MAHKKAGGSTRNGRDSNPKYLGVKRYGGELVKAGTIIIRQRGTKTHPGVNVGCGKDHTLFALKDGTVKFHTGGALNRKFVSIEE</sequence>
<organism>
    <name type="scientific">Francisella tularensis subsp. holarctica (strain LVS)</name>
    <dbReference type="NCBI Taxonomy" id="376619"/>
    <lineage>
        <taxon>Bacteria</taxon>
        <taxon>Pseudomonadati</taxon>
        <taxon>Pseudomonadota</taxon>
        <taxon>Gammaproteobacteria</taxon>
        <taxon>Thiotrichales</taxon>
        <taxon>Francisellaceae</taxon>
        <taxon>Francisella</taxon>
    </lineage>
</organism>
<gene>
    <name evidence="1" type="primary">rpmA</name>
    <name type="ordered locus">FTL_1452</name>
</gene>
<feature type="chain" id="PRO_1000017483" description="Large ribosomal subunit protein bL27">
    <location>
        <begin position="1"/>
        <end position="84"/>
    </location>
</feature>
<feature type="region of interest" description="Disordered" evidence="2">
    <location>
        <begin position="1"/>
        <end position="21"/>
    </location>
</feature>
<dbReference type="EMBL" id="AM233362">
    <property type="protein sequence ID" value="CAJ79891.1"/>
    <property type="molecule type" value="Genomic_DNA"/>
</dbReference>
<dbReference type="RefSeq" id="WP_003016752.1">
    <property type="nucleotide sequence ID" value="NZ_CP009694.1"/>
</dbReference>
<dbReference type="SMR" id="Q2A2E5"/>
<dbReference type="KEGG" id="ftl:FTL_1452"/>
<dbReference type="Proteomes" id="UP000001944">
    <property type="component" value="Chromosome"/>
</dbReference>
<dbReference type="GO" id="GO:0022625">
    <property type="term" value="C:cytosolic large ribosomal subunit"/>
    <property type="evidence" value="ECO:0007669"/>
    <property type="project" value="TreeGrafter"/>
</dbReference>
<dbReference type="GO" id="GO:0003735">
    <property type="term" value="F:structural constituent of ribosome"/>
    <property type="evidence" value="ECO:0007669"/>
    <property type="project" value="InterPro"/>
</dbReference>
<dbReference type="GO" id="GO:0006412">
    <property type="term" value="P:translation"/>
    <property type="evidence" value="ECO:0007669"/>
    <property type="project" value="UniProtKB-UniRule"/>
</dbReference>
<dbReference type="FunFam" id="2.40.50.100:FF:000001">
    <property type="entry name" value="50S ribosomal protein L27"/>
    <property type="match status" value="1"/>
</dbReference>
<dbReference type="Gene3D" id="2.40.50.100">
    <property type="match status" value="1"/>
</dbReference>
<dbReference type="HAMAP" id="MF_00539">
    <property type="entry name" value="Ribosomal_bL27"/>
    <property type="match status" value="1"/>
</dbReference>
<dbReference type="InterPro" id="IPR001684">
    <property type="entry name" value="Ribosomal_bL27"/>
</dbReference>
<dbReference type="InterPro" id="IPR018261">
    <property type="entry name" value="Ribosomal_bL27_CS"/>
</dbReference>
<dbReference type="NCBIfam" id="TIGR00062">
    <property type="entry name" value="L27"/>
    <property type="match status" value="1"/>
</dbReference>
<dbReference type="PANTHER" id="PTHR15893:SF0">
    <property type="entry name" value="LARGE RIBOSOMAL SUBUNIT PROTEIN BL27M"/>
    <property type="match status" value="1"/>
</dbReference>
<dbReference type="PANTHER" id="PTHR15893">
    <property type="entry name" value="RIBOSOMAL PROTEIN L27"/>
    <property type="match status" value="1"/>
</dbReference>
<dbReference type="Pfam" id="PF01016">
    <property type="entry name" value="Ribosomal_L27"/>
    <property type="match status" value="1"/>
</dbReference>
<dbReference type="PRINTS" id="PR00063">
    <property type="entry name" value="RIBOSOMALL27"/>
</dbReference>
<dbReference type="SUPFAM" id="SSF110324">
    <property type="entry name" value="Ribosomal L27 protein-like"/>
    <property type="match status" value="1"/>
</dbReference>
<dbReference type="PROSITE" id="PS00831">
    <property type="entry name" value="RIBOSOMAL_L27"/>
    <property type="match status" value="1"/>
</dbReference>
<name>RL27_FRATH</name>